<accession>Q85G45</accession>
<organism>
    <name type="scientific">Cyanidioschyzon merolae (strain NIES-3377 / 10D)</name>
    <name type="common">Unicellular red alga</name>
    <dbReference type="NCBI Taxonomy" id="280699"/>
    <lineage>
        <taxon>Eukaryota</taxon>
        <taxon>Rhodophyta</taxon>
        <taxon>Bangiophyceae</taxon>
        <taxon>Cyanidiales</taxon>
        <taxon>Cyanidiaceae</taxon>
        <taxon>Cyanidioschyzon</taxon>
    </lineage>
</organism>
<gene>
    <name type="primary">rpoZ</name>
</gene>
<keyword id="KW-0150">Chloroplast</keyword>
<keyword id="KW-0240">DNA-directed RNA polymerase</keyword>
<keyword id="KW-0548">Nucleotidyltransferase</keyword>
<keyword id="KW-0934">Plastid</keyword>
<keyword id="KW-1185">Reference proteome</keyword>
<keyword id="KW-0804">Transcription</keyword>
<keyword id="KW-0808">Transferase</keyword>
<reference key="1">
    <citation type="journal article" date="2003" name="DNA Res.">
        <title>Complete sequence and analysis of the plastid genome of the unicellular red alga Cyanidioschyzon merolae.</title>
        <authorList>
            <person name="Ohta N."/>
            <person name="Matsuzaki M."/>
            <person name="Misumi O."/>
            <person name="Miyagishima S.-Y."/>
            <person name="Nozaki H."/>
            <person name="Tanaka K."/>
            <person name="Shin-i T."/>
            <person name="Kohara Y."/>
            <person name="Kuroiwa T."/>
        </authorList>
    </citation>
    <scope>NUCLEOTIDE SEQUENCE [LARGE SCALE GENOMIC DNA]</scope>
    <source>
        <strain>NIES-3377 / 10D</strain>
    </source>
</reference>
<protein>
    <recommendedName>
        <fullName>Putative DNA-directed RNA polymerase subunit omega</fullName>
        <shortName>PEP</shortName>
        <ecNumber>2.7.7.6</ecNumber>
    </recommendedName>
    <alternativeName>
        <fullName>Plastid-encoded RNA polymerase omega subunit</fullName>
        <shortName>RNA polymerase omega subunit</shortName>
    </alternativeName>
</protein>
<comment type="function">
    <text evidence="1">May be involved in RNA polymerase activity.</text>
</comment>
<comment type="catalytic activity">
    <reaction>
        <text>RNA(n) + a ribonucleoside 5'-triphosphate = RNA(n+1) + diphosphate</text>
        <dbReference type="Rhea" id="RHEA:21248"/>
        <dbReference type="Rhea" id="RHEA-COMP:14527"/>
        <dbReference type="Rhea" id="RHEA-COMP:17342"/>
        <dbReference type="ChEBI" id="CHEBI:33019"/>
        <dbReference type="ChEBI" id="CHEBI:61557"/>
        <dbReference type="ChEBI" id="CHEBI:140395"/>
        <dbReference type="EC" id="2.7.7.6"/>
    </reaction>
</comment>
<comment type="subcellular location">
    <subcellularLocation>
        <location>Plastid</location>
        <location>Chloroplast</location>
    </subcellularLocation>
</comment>
<comment type="similarity">
    <text evidence="2">Belongs to the RNA polymerase subunit omega family.</text>
</comment>
<evidence type="ECO:0000250" key="1"/>
<evidence type="ECO:0000305" key="2"/>
<proteinExistence type="inferred from homology"/>
<name>RPOZ_CYAM1</name>
<dbReference type="EC" id="2.7.7.6"/>
<dbReference type="EMBL" id="AB002583">
    <property type="protein sequence ID" value="BAC76146.1"/>
    <property type="molecule type" value="Genomic_DNA"/>
</dbReference>
<dbReference type="RefSeq" id="NP_848984.1">
    <property type="nucleotide sequence ID" value="NC_004799.1"/>
</dbReference>
<dbReference type="SMR" id="Q85G45"/>
<dbReference type="STRING" id="280699.Q85G45"/>
<dbReference type="EnsemblPlants" id="CMV061CT">
    <property type="protein sequence ID" value="CMV061CT"/>
    <property type="gene ID" value="CMV061C"/>
</dbReference>
<dbReference type="GeneID" id="844997"/>
<dbReference type="Gramene" id="CMV061CT">
    <property type="protein sequence ID" value="CMV061CT"/>
    <property type="gene ID" value="CMV061C"/>
</dbReference>
<dbReference type="KEGG" id="cme:CymeCp052"/>
<dbReference type="HOGENOM" id="CLU_3144873_0_0_1"/>
<dbReference type="Proteomes" id="UP000007014">
    <property type="component" value="Chloroplast"/>
</dbReference>
<dbReference type="GO" id="GO:0009507">
    <property type="term" value="C:chloroplast"/>
    <property type="evidence" value="ECO:0007669"/>
    <property type="project" value="UniProtKB-SubCell"/>
</dbReference>
<dbReference type="GO" id="GO:0000428">
    <property type="term" value="C:DNA-directed RNA polymerase complex"/>
    <property type="evidence" value="ECO:0007669"/>
    <property type="project" value="UniProtKB-KW"/>
</dbReference>
<dbReference type="GO" id="GO:0005739">
    <property type="term" value="C:mitochondrion"/>
    <property type="evidence" value="ECO:0007669"/>
    <property type="project" value="GOC"/>
</dbReference>
<dbReference type="GO" id="GO:0003899">
    <property type="term" value="F:DNA-directed RNA polymerase activity"/>
    <property type="evidence" value="ECO:0007669"/>
    <property type="project" value="UniProtKB-EC"/>
</dbReference>
<geneLocation type="chloroplast"/>
<feature type="chain" id="PRO_0000129021" description="Putative DNA-directed RNA polymerase subunit omega">
    <location>
        <begin position="1"/>
        <end position="49"/>
    </location>
</feature>
<sequence>MKLLNQMELLLSTCKNRYVLTREVAEYAKKTPSPNAVILAIWLMARKTK</sequence>